<accession>Q8YED5</accession>
<organism>
    <name type="scientific">Brucella melitensis biotype 1 (strain ATCC 23456 / CCUG 17765 / NCTC 10094 / 16M)</name>
    <dbReference type="NCBI Taxonomy" id="224914"/>
    <lineage>
        <taxon>Bacteria</taxon>
        <taxon>Pseudomonadati</taxon>
        <taxon>Pseudomonadota</taxon>
        <taxon>Alphaproteobacteria</taxon>
        <taxon>Hyphomicrobiales</taxon>
        <taxon>Brucellaceae</taxon>
        <taxon>Brucella/Ochrobactrum group</taxon>
        <taxon>Brucella</taxon>
    </lineage>
</organism>
<comment type="function">
    <text evidence="1">Plays an essential role in the initiation and regulation of chromosomal replication. ATP-DnaA binds to the origin of replication (oriC) to initiate formation of the DNA replication initiation complex once per cell cycle. Binds the DnaA box (a 9 base pair repeat at the origin) and separates the double-stranded (ds)DNA. Forms a right-handed helical filament on oriC DNA; dsDNA binds to the exterior of the filament while single-stranded (ss)DNA is stabiized in the filament's interior. The ATP-DnaA-oriC complex binds and stabilizes one strand of the AT-rich DNA unwinding element (DUE), permitting loading of DNA polymerase. After initiation quickly degrades to an ADP-DnaA complex that is not apt for DNA replication. Binds acidic phospholipids.</text>
</comment>
<comment type="subunit">
    <text evidence="1">Oligomerizes as a right-handed, spiral filament on DNA at oriC.</text>
</comment>
<comment type="subcellular location">
    <subcellularLocation>
        <location evidence="1">Cytoplasm</location>
    </subcellularLocation>
</comment>
<comment type="domain">
    <text evidence="1">Domain I is involved in oligomerization and binding regulators, domain II is flexibile and of varying length in different bacteria, domain III forms the AAA+ region, while domain IV binds dsDNA.</text>
</comment>
<comment type="similarity">
    <text evidence="1">Belongs to the DnaA family.</text>
</comment>
<comment type="sequence caution" evidence="2">
    <conflict type="erroneous initiation">
        <sequence resource="EMBL-CDS" id="AAL53124"/>
    </conflict>
</comment>
<name>DNAA_BRUME</name>
<sequence>MKMDSAVSEEAFERLTAKLKARVGGEIYSSWFGRLKLDDISKSIVRLSVPTAFLRSWINNHYSELLTELWQEENPQILKVEVVVRGVSRVVRSAAPAETCDNAEAKPAVTPREKMVFPVGQSFGGQSLGEKRGSAVVAESAAATGAVLGSPLDPRYTFDTFVDGASNRVALAAARTIAEAGSSAVRFNPLFIHASVGLGKTHLLQAIAAAALQRQEKARVVYLTAEYFMWRFATAIRDNNALSFKEQLRDIDLLVIDDMQFLQGKSIQHEFCHLLNTLLDSAKQVVVAADRAPSELESLDVRVRSRLQGGVALEVAAPDYEMRLEMLRRRLASAQCEDASLDIGEEILAHVARTVTGSGRELEGAFNQLLFRQSFEPNISIDRVDELLGHLTRAGEPKRIRIEEIQRIVARHYNVSKQDLLSNRRTRTIVKPRQVAMYLAKMMTPRSLPEIGRRFGGRDHTTVLHAVRKIEDLVGADTKLAQELELLKRLINDQAA</sequence>
<protein>
    <recommendedName>
        <fullName evidence="1">Chromosomal replication initiator protein DnaA</fullName>
    </recommendedName>
</protein>
<keyword id="KW-0067">ATP-binding</keyword>
<keyword id="KW-0963">Cytoplasm</keyword>
<keyword id="KW-0235">DNA replication</keyword>
<keyword id="KW-0238">DNA-binding</keyword>
<keyword id="KW-0446">Lipid-binding</keyword>
<keyword id="KW-0547">Nucleotide-binding</keyword>
<gene>
    <name evidence="1" type="primary">dnaA</name>
    <name type="ordered locus">BMEI1943</name>
</gene>
<dbReference type="EMBL" id="AE008917">
    <property type="protein sequence ID" value="AAL53124.1"/>
    <property type="status" value="ALT_INIT"/>
    <property type="molecule type" value="Genomic_DNA"/>
</dbReference>
<dbReference type="PIR" id="AI3494">
    <property type="entry name" value="AI3494"/>
</dbReference>
<dbReference type="SMR" id="Q8YED5"/>
<dbReference type="KEGG" id="bme:BMEI1943"/>
<dbReference type="KEGG" id="bmel:DK63_1548"/>
<dbReference type="PATRIC" id="fig|224914.52.peg.1634"/>
<dbReference type="eggNOG" id="COG0593">
    <property type="taxonomic scope" value="Bacteria"/>
</dbReference>
<dbReference type="Proteomes" id="UP000000419">
    <property type="component" value="Chromosome I"/>
</dbReference>
<dbReference type="GO" id="GO:0005737">
    <property type="term" value="C:cytoplasm"/>
    <property type="evidence" value="ECO:0007669"/>
    <property type="project" value="UniProtKB-SubCell"/>
</dbReference>
<dbReference type="GO" id="GO:0005886">
    <property type="term" value="C:plasma membrane"/>
    <property type="evidence" value="ECO:0007669"/>
    <property type="project" value="TreeGrafter"/>
</dbReference>
<dbReference type="GO" id="GO:0005524">
    <property type="term" value="F:ATP binding"/>
    <property type="evidence" value="ECO:0007669"/>
    <property type="project" value="UniProtKB-UniRule"/>
</dbReference>
<dbReference type="GO" id="GO:0016887">
    <property type="term" value="F:ATP hydrolysis activity"/>
    <property type="evidence" value="ECO:0007669"/>
    <property type="project" value="InterPro"/>
</dbReference>
<dbReference type="GO" id="GO:0003688">
    <property type="term" value="F:DNA replication origin binding"/>
    <property type="evidence" value="ECO:0007669"/>
    <property type="project" value="UniProtKB-UniRule"/>
</dbReference>
<dbReference type="GO" id="GO:0008289">
    <property type="term" value="F:lipid binding"/>
    <property type="evidence" value="ECO:0007669"/>
    <property type="project" value="UniProtKB-KW"/>
</dbReference>
<dbReference type="GO" id="GO:0006270">
    <property type="term" value="P:DNA replication initiation"/>
    <property type="evidence" value="ECO:0007669"/>
    <property type="project" value="UniProtKB-UniRule"/>
</dbReference>
<dbReference type="GO" id="GO:0006275">
    <property type="term" value="P:regulation of DNA replication"/>
    <property type="evidence" value="ECO:0007669"/>
    <property type="project" value="UniProtKB-UniRule"/>
</dbReference>
<dbReference type="CDD" id="cd06571">
    <property type="entry name" value="Bac_DnaA_C"/>
    <property type="match status" value="1"/>
</dbReference>
<dbReference type="FunFam" id="1.10.1750.10:FF:000002">
    <property type="entry name" value="Chromosomal replication initiator protein DnaA"/>
    <property type="match status" value="1"/>
</dbReference>
<dbReference type="Gene3D" id="1.10.1750.10">
    <property type="match status" value="1"/>
</dbReference>
<dbReference type="Gene3D" id="1.10.8.60">
    <property type="match status" value="1"/>
</dbReference>
<dbReference type="Gene3D" id="3.30.300.180">
    <property type="match status" value="1"/>
</dbReference>
<dbReference type="Gene3D" id="3.40.50.300">
    <property type="entry name" value="P-loop containing nucleotide triphosphate hydrolases"/>
    <property type="match status" value="1"/>
</dbReference>
<dbReference type="HAMAP" id="MF_00377">
    <property type="entry name" value="DnaA_bact"/>
    <property type="match status" value="1"/>
</dbReference>
<dbReference type="InterPro" id="IPR003593">
    <property type="entry name" value="AAA+_ATPase"/>
</dbReference>
<dbReference type="InterPro" id="IPR001957">
    <property type="entry name" value="Chromosome_initiator_DnaA"/>
</dbReference>
<dbReference type="InterPro" id="IPR020591">
    <property type="entry name" value="Chromosome_initiator_DnaA-like"/>
</dbReference>
<dbReference type="InterPro" id="IPR018312">
    <property type="entry name" value="Chromosome_initiator_DnaA_CS"/>
</dbReference>
<dbReference type="InterPro" id="IPR013159">
    <property type="entry name" value="DnaA_C"/>
</dbReference>
<dbReference type="InterPro" id="IPR013317">
    <property type="entry name" value="DnaA_dom"/>
</dbReference>
<dbReference type="InterPro" id="IPR024633">
    <property type="entry name" value="DnaA_N_dom"/>
</dbReference>
<dbReference type="InterPro" id="IPR038454">
    <property type="entry name" value="DnaA_N_sf"/>
</dbReference>
<dbReference type="InterPro" id="IPR027417">
    <property type="entry name" value="P-loop_NTPase"/>
</dbReference>
<dbReference type="InterPro" id="IPR010921">
    <property type="entry name" value="Trp_repressor/repl_initiator"/>
</dbReference>
<dbReference type="NCBIfam" id="TIGR00362">
    <property type="entry name" value="DnaA"/>
    <property type="match status" value="1"/>
</dbReference>
<dbReference type="PANTHER" id="PTHR30050">
    <property type="entry name" value="CHROMOSOMAL REPLICATION INITIATOR PROTEIN DNAA"/>
    <property type="match status" value="1"/>
</dbReference>
<dbReference type="PANTHER" id="PTHR30050:SF2">
    <property type="entry name" value="CHROMOSOMAL REPLICATION INITIATOR PROTEIN DNAA"/>
    <property type="match status" value="1"/>
</dbReference>
<dbReference type="Pfam" id="PF00308">
    <property type="entry name" value="Bac_DnaA"/>
    <property type="match status" value="1"/>
</dbReference>
<dbReference type="Pfam" id="PF08299">
    <property type="entry name" value="Bac_DnaA_C"/>
    <property type="match status" value="1"/>
</dbReference>
<dbReference type="Pfam" id="PF11638">
    <property type="entry name" value="DnaA_N"/>
    <property type="match status" value="1"/>
</dbReference>
<dbReference type="PRINTS" id="PR00051">
    <property type="entry name" value="DNAA"/>
</dbReference>
<dbReference type="SMART" id="SM00382">
    <property type="entry name" value="AAA"/>
    <property type="match status" value="1"/>
</dbReference>
<dbReference type="SMART" id="SM00760">
    <property type="entry name" value="Bac_DnaA_C"/>
    <property type="match status" value="1"/>
</dbReference>
<dbReference type="SUPFAM" id="SSF52540">
    <property type="entry name" value="P-loop containing nucleoside triphosphate hydrolases"/>
    <property type="match status" value="1"/>
</dbReference>
<dbReference type="SUPFAM" id="SSF48295">
    <property type="entry name" value="TrpR-like"/>
    <property type="match status" value="1"/>
</dbReference>
<dbReference type="PROSITE" id="PS01008">
    <property type="entry name" value="DNAA"/>
    <property type="match status" value="1"/>
</dbReference>
<reference key="1">
    <citation type="journal article" date="2002" name="Proc. Natl. Acad. Sci. U.S.A.">
        <title>The genome sequence of the facultative intracellular pathogen Brucella melitensis.</title>
        <authorList>
            <person name="DelVecchio V.G."/>
            <person name="Kapatral V."/>
            <person name="Redkar R.J."/>
            <person name="Patra G."/>
            <person name="Mujer C."/>
            <person name="Los T."/>
            <person name="Ivanova N."/>
            <person name="Anderson I."/>
            <person name="Bhattacharyya A."/>
            <person name="Lykidis A."/>
            <person name="Reznik G."/>
            <person name="Jablonski L."/>
            <person name="Larsen N."/>
            <person name="D'Souza M."/>
            <person name="Bernal A."/>
            <person name="Mazur M."/>
            <person name="Goltsman E."/>
            <person name="Selkov E."/>
            <person name="Elzer P.H."/>
            <person name="Hagius S."/>
            <person name="O'Callaghan D."/>
            <person name="Letesson J.-J."/>
            <person name="Haselkorn R."/>
            <person name="Kyrpides N.C."/>
            <person name="Overbeek R."/>
        </authorList>
    </citation>
    <scope>NUCLEOTIDE SEQUENCE [LARGE SCALE GENOMIC DNA]</scope>
    <source>
        <strain>ATCC 23456 / CCUG 17765 / NCTC 10094 / 16M</strain>
    </source>
</reference>
<proteinExistence type="inferred from homology"/>
<feature type="chain" id="PRO_0000114146" description="Chromosomal replication initiator protein DnaA">
    <location>
        <begin position="1"/>
        <end position="496"/>
    </location>
</feature>
<feature type="region of interest" description="Domain I, interacts with DnaA modulators" evidence="1">
    <location>
        <begin position="1"/>
        <end position="76"/>
    </location>
</feature>
<feature type="region of interest" description="Domain II" evidence="1">
    <location>
        <begin position="76"/>
        <end position="150"/>
    </location>
</feature>
<feature type="region of interest" description="Domain III, AAA+ region" evidence="1">
    <location>
        <begin position="151"/>
        <end position="373"/>
    </location>
</feature>
<feature type="region of interest" description="Domain IV, binds dsDNA" evidence="1">
    <location>
        <begin position="374"/>
        <end position="496"/>
    </location>
</feature>
<feature type="binding site" evidence="1">
    <location>
        <position position="197"/>
    </location>
    <ligand>
        <name>ATP</name>
        <dbReference type="ChEBI" id="CHEBI:30616"/>
    </ligand>
</feature>
<feature type="binding site" evidence="1">
    <location>
        <position position="199"/>
    </location>
    <ligand>
        <name>ATP</name>
        <dbReference type="ChEBI" id="CHEBI:30616"/>
    </ligand>
</feature>
<feature type="binding site" evidence="1">
    <location>
        <position position="200"/>
    </location>
    <ligand>
        <name>ATP</name>
        <dbReference type="ChEBI" id="CHEBI:30616"/>
    </ligand>
</feature>
<feature type="binding site" evidence="1">
    <location>
        <position position="201"/>
    </location>
    <ligand>
        <name>ATP</name>
        <dbReference type="ChEBI" id="CHEBI:30616"/>
    </ligand>
</feature>
<evidence type="ECO:0000255" key="1">
    <source>
        <dbReference type="HAMAP-Rule" id="MF_00377"/>
    </source>
</evidence>
<evidence type="ECO:0000305" key="2"/>